<protein>
    <recommendedName>
        <fullName evidence="2">Paraneoplastic antigen-like protein 8A</fullName>
    </recommendedName>
    <alternativeName>
        <fullName>PNMA-like protein 1</fullName>
    </alternativeName>
</protein>
<name>PNM8A_MOUSE</name>
<accession>Q80VM8</accession>
<accession>Q8C533</accession>
<reference key="1">
    <citation type="journal article" date="2004" name="Genome Res.">
        <title>The status, quality, and expansion of the NIH full-length cDNA project: the Mammalian Gene Collection (MGC).</title>
        <authorList>
            <consortium name="The MGC Project Team"/>
        </authorList>
    </citation>
    <scope>NUCLEOTIDE SEQUENCE [LARGE SCALE MRNA]</scope>
    <source>
        <tissue>Olfactory epithelium</tissue>
    </source>
</reference>
<reference key="2">
    <citation type="journal article" date="2005" name="Science">
        <title>The transcriptional landscape of the mammalian genome.</title>
        <authorList>
            <person name="Carninci P."/>
            <person name="Kasukawa T."/>
            <person name="Katayama S."/>
            <person name="Gough J."/>
            <person name="Frith M.C."/>
            <person name="Maeda N."/>
            <person name="Oyama R."/>
            <person name="Ravasi T."/>
            <person name="Lenhard B."/>
            <person name="Wells C."/>
            <person name="Kodzius R."/>
            <person name="Shimokawa K."/>
            <person name="Bajic V.B."/>
            <person name="Brenner S.E."/>
            <person name="Batalov S."/>
            <person name="Forrest A.R."/>
            <person name="Zavolan M."/>
            <person name="Davis M.J."/>
            <person name="Wilming L.G."/>
            <person name="Aidinis V."/>
            <person name="Allen J.E."/>
            <person name="Ambesi-Impiombato A."/>
            <person name="Apweiler R."/>
            <person name="Aturaliya R.N."/>
            <person name="Bailey T.L."/>
            <person name="Bansal M."/>
            <person name="Baxter L."/>
            <person name="Beisel K.W."/>
            <person name="Bersano T."/>
            <person name="Bono H."/>
            <person name="Chalk A.M."/>
            <person name="Chiu K.P."/>
            <person name="Choudhary V."/>
            <person name="Christoffels A."/>
            <person name="Clutterbuck D.R."/>
            <person name="Crowe M.L."/>
            <person name="Dalla E."/>
            <person name="Dalrymple B.P."/>
            <person name="de Bono B."/>
            <person name="Della Gatta G."/>
            <person name="di Bernardo D."/>
            <person name="Down T."/>
            <person name="Engstrom P."/>
            <person name="Fagiolini M."/>
            <person name="Faulkner G."/>
            <person name="Fletcher C.F."/>
            <person name="Fukushima T."/>
            <person name="Furuno M."/>
            <person name="Futaki S."/>
            <person name="Gariboldi M."/>
            <person name="Georgii-Hemming P."/>
            <person name="Gingeras T.R."/>
            <person name="Gojobori T."/>
            <person name="Green R.E."/>
            <person name="Gustincich S."/>
            <person name="Harbers M."/>
            <person name="Hayashi Y."/>
            <person name="Hensch T.K."/>
            <person name="Hirokawa N."/>
            <person name="Hill D."/>
            <person name="Huminiecki L."/>
            <person name="Iacono M."/>
            <person name="Ikeo K."/>
            <person name="Iwama A."/>
            <person name="Ishikawa T."/>
            <person name="Jakt M."/>
            <person name="Kanapin A."/>
            <person name="Katoh M."/>
            <person name="Kawasawa Y."/>
            <person name="Kelso J."/>
            <person name="Kitamura H."/>
            <person name="Kitano H."/>
            <person name="Kollias G."/>
            <person name="Krishnan S.P."/>
            <person name="Kruger A."/>
            <person name="Kummerfeld S.K."/>
            <person name="Kurochkin I.V."/>
            <person name="Lareau L.F."/>
            <person name="Lazarevic D."/>
            <person name="Lipovich L."/>
            <person name="Liu J."/>
            <person name="Liuni S."/>
            <person name="McWilliam S."/>
            <person name="Madan Babu M."/>
            <person name="Madera M."/>
            <person name="Marchionni L."/>
            <person name="Matsuda H."/>
            <person name="Matsuzawa S."/>
            <person name="Miki H."/>
            <person name="Mignone F."/>
            <person name="Miyake S."/>
            <person name="Morris K."/>
            <person name="Mottagui-Tabar S."/>
            <person name="Mulder N."/>
            <person name="Nakano N."/>
            <person name="Nakauchi H."/>
            <person name="Ng P."/>
            <person name="Nilsson R."/>
            <person name="Nishiguchi S."/>
            <person name="Nishikawa S."/>
            <person name="Nori F."/>
            <person name="Ohara O."/>
            <person name="Okazaki Y."/>
            <person name="Orlando V."/>
            <person name="Pang K.C."/>
            <person name="Pavan W.J."/>
            <person name="Pavesi G."/>
            <person name="Pesole G."/>
            <person name="Petrovsky N."/>
            <person name="Piazza S."/>
            <person name="Reed J."/>
            <person name="Reid J.F."/>
            <person name="Ring B.Z."/>
            <person name="Ringwald M."/>
            <person name="Rost B."/>
            <person name="Ruan Y."/>
            <person name="Salzberg S.L."/>
            <person name="Sandelin A."/>
            <person name="Schneider C."/>
            <person name="Schoenbach C."/>
            <person name="Sekiguchi K."/>
            <person name="Semple C.A."/>
            <person name="Seno S."/>
            <person name="Sessa L."/>
            <person name="Sheng Y."/>
            <person name="Shibata Y."/>
            <person name="Shimada H."/>
            <person name="Shimada K."/>
            <person name="Silva D."/>
            <person name="Sinclair B."/>
            <person name="Sperling S."/>
            <person name="Stupka E."/>
            <person name="Sugiura K."/>
            <person name="Sultana R."/>
            <person name="Takenaka Y."/>
            <person name="Taki K."/>
            <person name="Tammoja K."/>
            <person name="Tan S.L."/>
            <person name="Tang S."/>
            <person name="Taylor M.S."/>
            <person name="Tegner J."/>
            <person name="Teichmann S.A."/>
            <person name="Ueda H.R."/>
            <person name="van Nimwegen E."/>
            <person name="Verardo R."/>
            <person name="Wei C.L."/>
            <person name="Yagi K."/>
            <person name="Yamanishi H."/>
            <person name="Zabarovsky E."/>
            <person name="Zhu S."/>
            <person name="Zimmer A."/>
            <person name="Hide W."/>
            <person name="Bult C."/>
            <person name="Grimmond S.M."/>
            <person name="Teasdale R.D."/>
            <person name="Liu E.T."/>
            <person name="Brusic V."/>
            <person name="Quackenbush J."/>
            <person name="Wahlestedt C."/>
            <person name="Mattick J.S."/>
            <person name="Hume D.A."/>
            <person name="Kai C."/>
            <person name="Sasaki D."/>
            <person name="Tomaru Y."/>
            <person name="Fukuda S."/>
            <person name="Kanamori-Katayama M."/>
            <person name="Suzuki M."/>
            <person name="Aoki J."/>
            <person name="Arakawa T."/>
            <person name="Iida J."/>
            <person name="Imamura K."/>
            <person name="Itoh M."/>
            <person name="Kato T."/>
            <person name="Kawaji H."/>
            <person name="Kawagashira N."/>
            <person name="Kawashima T."/>
            <person name="Kojima M."/>
            <person name="Kondo S."/>
            <person name="Konno H."/>
            <person name="Nakano K."/>
            <person name="Ninomiya N."/>
            <person name="Nishio T."/>
            <person name="Okada M."/>
            <person name="Plessy C."/>
            <person name="Shibata K."/>
            <person name="Shiraki T."/>
            <person name="Suzuki S."/>
            <person name="Tagami M."/>
            <person name="Waki K."/>
            <person name="Watahiki A."/>
            <person name="Okamura-Oho Y."/>
            <person name="Suzuki H."/>
            <person name="Kawai J."/>
            <person name="Hayashizaki Y."/>
        </authorList>
    </citation>
    <scope>NUCLEOTIDE SEQUENCE [LARGE SCALE MRNA] OF 1-246</scope>
    <source>
        <strain>C57BL/6J</strain>
        <tissue>Spinal cord</tissue>
    </source>
</reference>
<organism>
    <name type="scientific">Mus musculus</name>
    <name type="common">Mouse</name>
    <dbReference type="NCBI Taxonomy" id="10090"/>
    <lineage>
        <taxon>Eukaryota</taxon>
        <taxon>Metazoa</taxon>
        <taxon>Chordata</taxon>
        <taxon>Craniata</taxon>
        <taxon>Vertebrata</taxon>
        <taxon>Euteleostomi</taxon>
        <taxon>Mammalia</taxon>
        <taxon>Eutheria</taxon>
        <taxon>Euarchontoglires</taxon>
        <taxon>Glires</taxon>
        <taxon>Rodentia</taxon>
        <taxon>Myomorpha</taxon>
        <taxon>Muroidea</taxon>
        <taxon>Muridae</taxon>
        <taxon>Murinae</taxon>
        <taxon>Mus</taxon>
        <taxon>Mus</taxon>
    </lineage>
</organism>
<comment type="similarity">
    <text evidence="2">Belongs to the PNMA family.</text>
</comment>
<proteinExistence type="evidence at transcript level"/>
<dbReference type="EMBL" id="BC048228">
    <property type="protein sequence ID" value="AAH48228.1"/>
    <property type="molecule type" value="mRNA"/>
</dbReference>
<dbReference type="EMBL" id="AK079661">
    <property type="protein sequence ID" value="BAC37719.1"/>
    <property type="molecule type" value="mRNA"/>
</dbReference>
<dbReference type="CCDS" id="CCDS20858.1"/>
<dbReference type="RefSeq" id="NP_001007570.1">
    <property type="nucleotide sequence ID" value="NM_001007569.2"/>
</dbReference>
<dbReference type="RefSeq" id="XP_006540424.1">
    <property type="nucleotide sequence ID" value="XM_006540361.5"/>
</dbReference>
<dbReference type="FunCoup" id="Q80VM8">
    <property type="interactions" value="9"/>
</dbReference>
<dbReference type="STRING" id="10090.ENSMUSP00000040929"/>
<dbReference type="iPTMnet" id="Q80VM8"/>
<dbReference type="PhosphoSitePlus" id="Q80VM8"/>
<dbReference type="PaxDb" id="10090-ENSMUSP00000040929"/>
<dbReference type="PeptideAtlas" id="Q80VM8"/>
<dbReference type="ProteomicsDB" id="289845"/>
<dbReference type="Antibodypedia" id="2037">
    <property type="antibodies" value="56 antibodies from 19 providers"/>
</dbReference>
<dbReference type="Ensembl" id="ENSMUST00000038163.8">
    <property type="protein sequence ID" value="ENSMUSP00000040929.7"/>
    <property type="gene ID" value="ENSMUSG00000041141.8"/>
</dbReference>
<dbReference type="GeneID" id="71691"/>
<dbReference type="KEGG" id="mmu:71691"/>
<dbReference type="UCSC" id="uc009fip.1">
    <property type="organism name" value="mouse"/>
</dbReference>
<dbReference type="AGR" id="MGI:1918941"/>
<dbReference type="CTD" id="55228"/>
<dbReference type="MGI" id="MGI:1918941">
    <property type="gene designation" value="Pnma8a"/>
</dbReference>
<dbReference type="VEuPathDB" id="HostDB:ENSMUSG00000041141"/>
<dbReference type="eggNOG" id="ENOG502TEDX">
    <property type="taxonomic scope" value="Eukaryota"/>
</dbReference>
<dbReference type="GeneTree" id="ENSGT01030000234522"/>
<dbReference type="HOGENOM" id="CLU_050538_0_0_1"/>
<dbReference type="InParanoid" id="Q80VM8"/>
<dbReference type="OMA" id="WEDVVHL"/>
<dbReference type="OrthoDB" id="115435at2759"/>
<dbReference type="PhylomeDB" id="Q80VM8"/>
<dbReference type="TreeFam" id="TF335054"/>
<dbReference type="BioGRID-ORCS" id="71691">
    <property type="hits" value="2 hits in 76 CRISPR screens"/>
</dbReference>
<dbReference type="ChiTaRS" id="Pnmal1">
    <property type="organism name" value="mouse"/>
</dbReference>
<dbReference type="PRO" id="PR:Q80VM8"/>
<dbReference type="Proteomes" id="UP000000589">
    <property type="component" value="Chromosome 7"/>
</dbReference>
<dbReference type="RNAct" id="Q80VM8">
    <property type="molecule type" value="protein"/>
</dbReference>
<dbReference type="Bgee" id="ENSMUSG00000041141">
    <property type="expression patterns" value="Expressed in CA1 field of hippocampus and 209 other cell types or tissues"/>
</dbReference>
<dbReference type="InterPro" id="IPR049131">
    <property type="entry name" value="PNM8A_C"/>
</dbReference>
<dbReference type="InterPro" id="IPR026523">
    <property type="entry name" value="PNMA"/>
</dbReference>
<dbReference type="InterPro" id="IPR048271">
    <property type="entry name" value="PNMA_N"/>
</dbReference>
<dbReference type="PANTHER" id="PTHR23095">
    <property type="entry name" value="PARANEOPLASTIC ANTIGEN"/>
    <property type="match status" value="1"/>
</dbReference>
<dbReference type="PANTHER" id="PTHR23095:SF21">
    <property type="entry name" value="PARANEOPLASTIC ANTIGEN-LIKE PROTEIN 8A"/>
    <property type="match status" value="1"/>
</dbReference>
<dbReference type="Pfam" id="PF20847">
    <property type="entry name" value="PNM8A"/>
    <property type="match status" value="1"/>
</dbReference>
<dbReference type="Pfam" id="PF20846">
    <property type="entry name" value="PNMA_N"/>
    <property type="match status" value="1"/>
</dbReference>
<keyword id="KW-1185">Reference proteome</keyword>
<gene>
    <name evidence="3" type="primary">Pnma8a</name>
    <name evidence="3" type="synonym">Pnmal1</name>
</gene>
<evidence type="ECO:0000256" key="1">
    <source>
        <dbReference type="SAM" id="MobiDB-lite"/>
    </source>
</evidence>
<evidence type="ECO:0000305" key="2"/>
<evidence type="ECO:0000312" key="3">
    <source>
        <dbReference type="MGI" id="MGI:1918941"/>
    </source>
</evidence>
<sequence length="430" mass="48062">MSEPVAMTLLEDWCRGMGMDIHRSLLVTGIPEYCSHAEIEETLNGVLLPLGTYRVLNKIFLRQENVKAALVEVSEGVNLSSIPREFPGRGGVWRVVCRDPTQDDDFLKNLNEFLDGEGRTWEDMVRLLKLNPNPPLPNSNQPPPNWAEALGLLLGAVVQVIFYMDAAIRSRDEEARAEEAAEAELMEAWASTARKRVKKEPGLGVEVGSAFKMEDRNYWKNTEDHGDPPKPLVRRPGGKIRSRRRKQKKNLKQEPICWRKSQGSNYNSNYNKVNLEAGEAAQSSEIPESVKSNKKPFVKQEETVWKKKRVWRDPSDLPRSALPAADSPGNLEDSDQDGGPENPAKKKAMTWASNKIPVPTRKKKKMVSLGTLSYVLLDAEATKNKTAILKKGLGARRAVSVPHDAPASTSRPQKTKLGAFPRVSKDSRKL</sequence>
<feature type="chain" id="PRO_0000325838" description="Paraneoplastic antigen-like protein 8A">
    <location>
        <begin position="1"/>
        <end position="430"/>
    </location>
</feature>
<feature type="region of interest" description="Disordered" evidence="1">
    <location>
        <begin position="219"/>
        <end position="270"/>
    </location>
</feature>
<feature type="region of interest" description="Disordered" evidence="1">
    <location>
        <begin position="313"/>
        <end position="364"/>
    </location>
</feature>
<feature type="region of interest" description="Disordered" evidence="1">
    <location>
        <begin position="392"/>
        <end position="430"/>
    </location>
</feature>
<feature type="compositionally biased region" description="Basic and acidic residues" evidence="1">
    <location>
        <begin position="219"/>
        <end position="228"/>
    </location>
</feature>
<feature type="compositionally biased region" description="Basic residues" evidence="1">
    <location>
        <begin position="232"/>
        <end position="250"/>
    </location>
</feature>
<feature type="compositionally biased region" description="Polar residues" evidence="1">
    <location>
        <begin position="261"/>
        <end position="270"/>
    </location>
</feature>